<protein>
    <recommendedName>
        <fullName evidence="1">ATP synthase subunit delta</fullName>
    </recommendedName>
    <alternativeName>
        <fullName evidence="1">ATP synthase F(1) sector subunit delta</fullName>
    </alternativeName>
    <alternativeName>
        <fullName evidence="1">F-type ATPase subunit delta</fullName>
        <shortName evidence="1">F-ATPase subunit delta</shortName>
    </alternativeName>
</protein>
<evidence type="ECO:0000255" key="1">
    <source>
        <dbReference type="HAMAP-Rule" id="MF_01416"/>
    </source>
</evidence>
<proteinExistence type="inferred from homology"/>
<feature type="chain" id="PRO_0000371139" description="ATP synthase subunit delta">
    <location>
        <begin position="1"/>
        <end position="177"/>
    </location>
</feature>
<comment type="function">
    <text evidence="1">F(1)F(0) ATP synthase produces ATP from ADP in the presence of a proton or sodium gradient. F-type ATPases consist of two structural domains, F(1) containing the extramembraneous catalytic core and F(0) containing the membrane proton channel, linked together by a central stalk and a peripheral stalk. During catalysis, ATP synthesis in the catalytic domain of F(1) is coupled via a rotary mechanism of the central stalk subunits to proton translocation.</text>
</comment>
<comment type="function">
    <text evidence="1">This protein is part of the stalk that links CF(0) to CF(1). It either transmits conformational changes from CF(0) to CF(1) or is implicated in proton conduction.</text>
</comment>
<comment type="subunit">
    <text evidence="1">F-type ATPases have 2 components, F(1) - the catalytic core - and F(0) - the membrane proton channel. F(1) has five subunits: alpha(3), beta(3), gamma(1), delta(1), epsilon(1). F(0) has three main subunits: a(1), b(2) and c(10-14). The alpha and beta chains form an alternating ring which encloses part of the gamma chain. F(1) is attached to F(0) by a central stalk formed by the gamma and epsilon chains, while a peripheral stalk is formed by the delta and b chains.</text>
</comment>
<comment type="subcellular location">
    <subcellularLocation>
        <location evidence="1">Cell inner membrane</location>
        <topology evidence="1">Peripheral membrane protein</topology>
    </subcellularLocation>
</comment>
<comment type="similarity">
    <text evidence="1">Belongs to the ATPase delta chain family.</text>
</comment>
<sequence length="177" mass="19332">MSEFITVARPYAKAAFDFAVEHQSVERWQDMLAFAAEVTKNEQMAELLSGALAPETLAESFIAVCGEQLDENGQNLIRVMAENGRLNALPDVLEQFIHLRAVSEATAEVDVISAAALSEQQLAKISAAMEKRLSRKVKLNCKIDKSVMAGVIIRAGDMVIDGSVRGRLERLADVLQS</sequence>
<name>ATPD_SHIBS</name>
<dbReference type="EMBL" id="CP000036">
    <property type="protein sequence ID" value="ABB68223.1"/>
    <property type="molecule type" value="Genomic_DNA"/>
</dbReference>
<dbReference type="RefSeq" id="WP_001288587.1">
    <property type="nucleotide sequence ID" value="NC_007613.1"/>
</dbReference>
<dbReference type="SMR" id="Q31UN5"/>
<dbReference type="GeneID" id="93778232"/>
<dbReference type="KEGG" id="sbo:SBO_3752"/>
<dbReference type="HOGENOM" id="CLU_085114_3_0_6"/>
<dbReference type="Proteomes" id="UP000007067">
    <property type="component" value="Chromosome"/>
</dbReference>
<dbReference type="GO" id="GO:0005886">
    <property type="term" value="C:plasma membrane"/>
    <property type="evidence" value="ECO:0007669"/>
    <property type="project" value="UniProtKB-SubCell"/>
</dbReference>
<dbReference type="GO" id="GO:0045259">
    <property type="term" value="C:proton-transporting ATP synthase complex"/>
    <property type="evidence" value="ECO:0007669"/>
    <property type="project" value="UniProtKB-KW"/>
</dbReference>
<dbReference type="GO" id="GO:0046933">
    <property type="term" value="F:proton-transporting ATP synthase activity, rotational mechanism"/>
    <property type="evidence" value="ECO:0007669"/>
    <property type="project" value="UniProtKB-UniRule"/>
</dbReference>
<dbReference type="FunFam" id="1.10.520.20:FF:000001">
    <property type="entry name" value="ATP synthase subunit delta"/>
    <property type="match status" value="1"/>
</dbReference>
<dbReference type="Gene3D" id="1.10.520.20">
    <property type="entry name" value="N-terminal domain of the delta subunit of the F1F0-ATP synthase"/>
    <property type="match status" value="1"/>
</dbReference>
<dbReference type="HAMAP" id="MF_01416">
    <property type="entry name" value="ATP_synth_delta_bact"/>
    <property type="match status" value="1"/>
</dbReference>
<dbReference type="InterPro" id="IPR026015">
    <property type="entry name" value="ATP_synth_OSCP/delta_N_sf"/>
</dbReference>
<dbReference type="InterPro" id="IPR020781">
    <property type="entry name" value="ATPase_OSCP/d_CS"/>
</dbReference>
<dbReference type="InterPro" id="IPR000711">
    <property type="entry name" value="ATPase_OSCP/dsu"/>
</dbReference>
<dbReference type="NCBIfam" id="TIGR01145">
    <property type="entry name" value="ATP_synt_delta"/>
    <property type="match status" value="1"/>
</dbReference>
<dbReference type="NCBIfam" id="NF004402">
    <property type="entry name" value="PRK05758.2-2"/>
    <property type="match status" value="1"/>
</dbReference>
<dbReference type="NCBIfam" id="NF004404">
    <property type="entry name" value="PRK05758.2-5"/>
    <property type="match status" value="1"/>
</dbReference>
<dbReference type="PANTHER" id="PTHR11910">
    <property type="entry name" value="ATP SYNTHASE DELTA CHAIN"/>
    <property type="match status" value="1"/>
</dbReference>
<dbReference type="Pfam" id="PF00213">
    <property type="entry name" value="OSCP"/>
    <property type="match status" value="1"/>
</dbReference>
<dbReference type="PRINTS" id="PR00125">
    <property type="entry name" value="ATPASEDELTA"/>
</dbReference>
<dbReference type="SUPFAM" id="SSF47928">
    <property type="entry name" value="N-terminal domain of the delta subunit of the F1F0-ATP synthase"/>
    <property type="match status" value="1"/>
</dbReference>
<dbReference type="PROSITE" id="PS00389">
    <property type="entry name" value="ATPASE_DELTA"/>
    <property type="match status" value="1"/>
</dbReference>
<accession>Q31UN5</accession>
<organism>
    <name type="scientific">Shigella boydii serotype 4 (strain Sb227)</name>
    <dbReference type="NCBI Taxonomy" id="300268"/>
    <lineage>
        <taxon>Bacteria</taxon>
        <taxon>Pseudomonadati</taxon>
        <taxon>Pseudomonadota</taxon>
        <taxon>Gammaproteobacteria</taxon>
        <taxon>Enterobacterales</taxon>
        <taxon>Enterobacteriaceae</taxon>
        <taxon>Shigella</taxon>
    </lineage>
</organism>
<keyword id="KW-0066">ATP synthesis</keyword>
<keyword id="KW-0997">Cell inner membrane</keyword>
<keyword id="KW-1003">Cell membrane</keyword>
<keyword id="KW-0139">CF(1)</keyword>
<keyword id="KW-0375">Hydrogen ion transport</keyword>
<keyword id="KW-0406">Ion transport</keyword>
<keyword id="KW-0472">Membrane</keyword>
<keyword id="KW-0813">Transport</keyword>
<reference key="1">
    <citation type="journal article" date="2005" name="Nucleic Acids Res.">
        <title>Genome dynamics and diversity of Shigella species, the etiologic agents of bacillary dysentery.</title>
        <authorList>
            <person name="Yang F."/>
            <person name="Yang J."/>
            <person name="Zhang X."/>
            <person name="Chen L."/>
            <person name="Jiang Y."/>
            <person name="Yan Y."/>
            <person name="Tang X."/>
            <person name="Wang J."/>
            <person name="Xiong Z."/>
            <person name="Dong J."/>
            <person name="Xue Y."/>
            <person name="Zhu Y."/>
            <person name="Xu X."/>
            <person name="Sun L."/>
            <person name="Chen S."/>
            <person name="Nie H."/>
            <person name="Peng J."/>
            <person name="Xu J."/>
            <person name="Wang Y."/>
            <person name="Yuan Z."/>
            <person name="Wen Y."/>
            <person name="Yao Z."/>
            <person name="Shen Y."/>
            <person name="Qiang B."/>
            <person name="Hou Y."/>
            <person name="Yu J."/>
            <person name="Jin Q."/>
        </authorList>
    </citation>
    <scope>NUCLEOTIDE SEQUENCE [LARGE SCALE GENOMIC DNA]</scope>
    <source>
        <strain>Sb227</strain>
    </source>
</reference>
<gene>
    <name evidence="1" type="primary">atpH</name>
    <name type="ordered locus">SBO_3752</name>
</gene>